<feature type="chain" id="PRO_1000049325" description="Small ribosomal subunit protein bS16">
    <location>
        <begin position="1"/>
        <end position="82"/>
    </location>
</feature>
<proteinExistence type="inferred from homology"/>
<protein>
    <recommendedName>
        <fullName evidence="1">Small ribosomal subunit protein bS16</fullName>
    </recommendedName>
    <alternativeName>
        <fullName evidence="2">30S ribosomal protein S16</fullName>
    </alternativeName>
</protein>
<comment type="similarity">
    <text evidence="1">Belongs to the bacterial ribosomal protein bS16 family.</text>
</comment>
<name>RS16_PSYIN</name>
<organism>
    <name type="scientific">Psychromonas ingrahamii (strain DSM 17664 / CCUG 51855 / 37)</name>
    <dbReference type="NCBI Taxonomy" id="357804"/>
    <lineage>
        <taxon>Bacteria</taxon>
        <taxon>Pseudomonadati</taxon>
        <taxon>Pseudomonadota</taxon>
        <taxon>Gammaproteobacteria</taxon>
        <taxon>Alteromonadales</taxon>
        <taxon>Psychromonadaceae</taxon>
        <taxon>Psychromonas</taxon>
    </lineage>
</organism>
<gene>
    <name evidence="1" type="primary">rpsP</name>
    <name type="ordered locus">Ping_3367</name>
</gene>
<accession>A1SZY8</accession>
<keyword id="KW-1185">Reference proteome</keyword>
<keyword id="KW-0687">Ribonucleoprotein</keyword>
<keyword id="KW-0689">Ribosomal protein</keyword>
<sequence length="82" mass="9143">MVTIRLTRGGVKKRPFYQVVVTDSRSPRDGCFLEKVGFFNPTAQGQAERLRLDTDRINHWVGLGAQLSDRVAKLVKDNAVAA</sequence>
<reference key="1">
    <citation type="journal article" date="2008" name="BMC Genomics">
        <title>Genomics of an extreme psychrophile, Psychromonas ingrahamii.</title>
        <authorList>
            <person name="Riley M."/>
            <person name="Staley J.T."/>
            <person name="Danchin A."/>
            <person name="Wang T.Z."/>
            <person name="Brettin T.S."/>
            <person name="Hauser L.J."/>
            <person name="Land M.L."/>
            <person name="Thompson L.S."/>
        </authorList>
    </citation>
    <scope>NUCLEOTIDE SEQUENCE [LARGE SCALE GENOMIC DNA]</scope>
    <source>
        <strain>DSM 17664 / CCUG 51855 / 37</strain>
    </source>
</reference>
<evidence type="ECO:0000255" key="1">
    <source>
        <dbReference type="HAMAP-Rule" id="MF_00385"/>
    </source>
</evidence>
<evidence type="ECO:0000305" key="2"/>
<dbReference type="EMBL" id="CP000510">
    <property type="protein sequence ID" value="ABM05053.1"/>
    <property type="molecule type" value="Genomic_DNA"/>
</dbReference>
<dbReference type="RefSeq" id="WP_011771605.1">
    <property type="nucleotide sequence ID" value="NC_008709.1"/>
</dbReference>
<dbReference type="SMR" id="A1SZY8"/>
<dbReference type="STRING" id="357804.Ping_3367"/>
<dbReference type="KEGG" id="pin:Ping_3367"/>
<dbReference type="eggNOG" id="COG0228">
    <property type="taxonomic scope" value="Bacteria"/>
</dbReference>
<dbReference type="HOGENOM" id="CLU_100590_5_1_6"/>
<dbReference type="OrthoDB" id="9807878at2"/>
<dbReference type="Proteomes" id="UP000000639">
    <property type="component" value="Chromosome"/>
</dbReference>
<dbReference type="GO" id="GO:0005737">
    <property type="term" value="C:cytoplasm"/>
    <property type="evidence" value="ECO:0007669"/>
    <property type="project" value="UniProtKB-ARBA"/>
</dbReference>
<dbReference type="GO" id="GO:0015935">
    <property type="term" value="C:small ribosomal subunit"/>
    <property type="evidence" value="ECO:0007669"/>
    <property type="project" value="TreeGrafter"/>
</dbReference>
<dbReference type="GO" id="GO:0003735">
    <property type="term" value="F:structural constituent of ribosome"/>
    <property type="evidence" value="ECO:0007669"/>
    <property type="project" value="InterPro"/>
</dbReference>
<dbReference type="GO" id="GO:0006412">
    <property type="term" value="P:translation"/>
    <property type="evidence" value="ECO:0007669"/>
    <property type="project" value="UniProtKB-UniRule"/>
</dbReference>
<dbReference type="FunFam" id="3.30.1320.10:FF:000001">
    <property type="entry name" value="30S ribosomal protein S16"/>
    <property type="match status" value="1"/>
</dbReference>
<dbReference type="Gene3D" id="3.30.1320.10">
    <property type="match status" value="1"/>
</dbReference>
<dbReference type="HAMAP" id="MF_00385">
    <property type="entry name" value="Ribosomal_bS16"/>
    <property type="match status" value="1"/>
</dbReference>
<dbReference type="InterPro" id="IPR000307">
    <property type="entry name" value="Ribosomal_bS16"/>
</dbReference>
<dbReference type="InterPro" id="IPR023803">
    <property type="entry name" value="Ribosomal_bS16_dom_sf"/>
</dbReference>
<dbReference type="NCBIfam" id="TIGR00002">
    <property type="entry name" value="S16"/>
    <property type="match status" value="1"/>
</dbReference>
<dbReference type="PANTHER" id="PTHR12919">
    <property type="entry name" value="30S RIBOSOMAL PROTEIN S16"/>
    <property type="match status" value="1"/>
</dbReference>
<dbReference type="PANTHER" id="PTHR12919:SF20">
    <property type="entry name" value="SMALL RIBOSOMAL SUBUNIT PROTEIN BS16M"/>
    <property type="match status" value="1"/>
</dbReference>
<dbReference type="Pfam" id="PF00886">
    <property type="entry name" value="Ribosomal_S16"/>
    <property type="match status" value="1"/>
</dbReference>
<dbReference type="SUPFAM" id="SSF54565">
    <property type="entry name" value="Ribosomal protein S16"/>
    <property type="match status" value="1"/>
</dbReference>